<evidence type="ECO:0000250" key="1">
    <source>
        <dbReference type="UniProtKB" id="Q8N983"/>
    </source>
</evidence>
<evidence type="ECO:0000255" key="2"/>
<evidence type="ECO:0000256" key="3">
    <source>
        <dbReference type="SAM" id="MobiDB-lite"/>
    </source>
</evidence>
<evidence type="ECO:0000305" key="4"/>
<sequence length="159" mass="17735">MTARGTASRFLTSVLHNGLGRYVQQLQRLSFSLSRDAPSSRGAREFVEREVTDFARRNPGVVIYVNPRPCCVPRVVAEYLNGAVREESLNCKSVEEIATLVQKLADQSGLDVIRIRKPFHTDSPSIQGQWHPFTNKPTALGGLRPREVQNPAPTQRPAQ</sequence>
<protein>
    <recommendedName>
        <fullName evidence="4">Large ribosomal subunit protein mL43</fullName>
    </recommendedName>
    <alternativeName>
        <fullName>39S ribosomal protein L43, mitochondrial</fullName>
        <shortName>L43mt</shortName>
        <shortName>MRP-L43</shortName>
    </alternativeName>
    <alternativeName>
        <fullName>Retina-specific 15.7 kDa protein</fullName>
    </alternativeName>
</protein>
<name>RM43_BOVIN</name>
<keyword id="KW-0496">Mitochondrion</keyword>
<keyword id="KW-1185">Reference proteome</keyword>
<keyword id="KW-0687">Ribonucleoprotein</keyword>
<keyword id="KW-0689">Ribosomal protein</keyword>
<keyword id="KW-0809">Transit peptide</keyword>
<feature type="transit peptide" description="Mitochondrion" evidence="2">
    <location>
        <begin position="1"/>
        <end status="unknown"/>
    </location>
</feature>
<feature type="chain" id="PRO_0000030560" description="Large ribosomal subunit protein mL43">
    <location>
        <begin status="unknown"/>
        <end position="159"/>
    </location>
</feature>
<feature type="region of interest" description="Disordered" evidence="3">
    <location>
        <begin position="123"/>
        <end position="159"/>
    </location>
</feature>
<feature type="sequence conflict" description="In Ref. 2; BAB59058." evidence="4" ref="2">
    <original>N</original>
    <variation>T</variation>
    <location>
        <position position="90"/>
    </location>
</feature>
<feature type="sequence conflict" description="In Ref. 2; BAB59058." evidence="4" ref="2">
    <original>T</original>
    <variation>R</variation>
    <location>
        <position position="99"/>
    </location>
</feature>
<feature type="sequence conflict" description="In Ref. 2; BAB59058." evidence="4" ref="2">
    <original>Q</original>
    <variation>K</variation>
    <location>
        <position position="102"/>
    </location>
</feature>
<feature type="sequence conflict" description="In Ref. 2; BAB59058." evidence="4" ref="2">
    <original>L</original>
    <variation>W</variation>
    <location>
        <position position="110"/>
    </location>
</feature>
<feature type="sequence conflict" description="In Ref. 2; BAB59058." evidence="4" ref="2">
    <original>K</original>
    <variation>R</variation>
    <location>
        <position position="117"/>
    </location>
</feature>
<accession>Q95KE5</accession>
<accession>Q28183</accession>
<accession>Q2KID5</accession>
<organism>
    <name type="scientific">Bos taurus</name>
    <name type="common">Bovine</name>
    <dbReference type="NCBI Taxonomy" id="9913"/>
    <lineage>
        <taxon>Eukaryota</taxon>
        <taxon>Metazoa</taxon>
        <taxon>Chordata</taxon>
        <taxon>Craniata</taxon>
        <taxon>Vertebrata</taxon>
        <taxon>Euteleostomi</taxon>
        <taxon>Mammalia</taxon>
        <taxon>Eutheria</taxon>
        <taxon>Laurasiatheria</taxon>
        <taxon>Artiodactyla</taxon>
        <taxon>Ruminantia</taxon>
        <taxon>Pecora</taxon>
        <taxon>Bovidae</taxon>
        <taxon>Bovinae</taxon>
        <taxon>Bos</taxon>
    </lineage>
</organism>
<dbReference type="EMBL" id="M34915">
    <property type="protein sequence ID" value="AAA30756.1"/>
    <property type="status" value="ALT_SEQ"/>
    <property type="molecule type" value="mRNA"/>
</dbReference>
<dbReference type="EMBL" id="AB062594">
    <property type="protein sequence ID" value="BAB59058.1"/>
    <property type="molecule type" value="mRNA"/>
</dbReference>
<dbReference type="EMBL" id="BC112678">
    <property type="protein sequence ID" value="AAI12679.1"/>
    <property type="molecule type" value="mRNA"/>
</dbReference>
<dbReference type="RefSeq" id="NP_776988.2">
    <property type="nucleotide sequence ID" value="NM_174563.3"/>
</dbReference>
<dbReference type="SMR" id="Q95KE5"/>
<dbReference type="FunCoup" id="Q95KE5">
    <property type="interactions" value="2034"/>
</dbReference>
<dbReference type="STRING" id="9913.ENSBTAP00000004265"/>
<dbReference type="iPTMnet" id="Q95KE5"/>
<dbReference type="PaxDb" id="9913-ENSBTAP00000004265"/>
<dbReference type="Ensembl" id="ENSBTAT00000004265.5">
    <property type="protein sequence ID" value="ENSBTAP00000004265.5"/>
    <property type="gene ID" value="ENSBTAG00000003294.5"/>
</dbReference>
<dbReference type="GeneID" id="282277"/>
<dbReference type="KEGG" id="bta:282277"/>
<dbReference type="CTD" id="84545"/>
<dbReference type="VEuPathDB" id="HostDB:ENSBTAG00000003294"/>
<dbReference type="VGNC" id="VGNC:106828">
    <property type="gene designation" value="MRPL43"/>
</dbReference>
<dbReference type="eggNOG" id="KOG3445">
    <property type="taxonomic scope" value="Eukaryota"/>
</dbReference>
<dbReference type="GeneTree" id="ENSGT00390000015375"/>
<dbReference type="InParanoid" id="Q95KE5"/>
<dbReference type="OMA" id="ISKWIDL"/>
<dbReference type="OrthoDB" id="88at2759"/>
<dbReference type="Reactome" id="R-BTA-5389840">
    <property type="pathway name" value="Mitochondrial translation elongation"/>
</dbReference>
<dbReference type="Reactome" id="R-BTA-5419276">
    <property type="pathway name" value="Mitochondrial translation termination"/>
</dbReference>
<dbReference type="Proteomes" id="UP000009136">
    <property type="component" value="Chromosome 26"/>
</dbReference>
<dbReference type="Bgee" id="ENSBTAG00000003294">
    <property type="expression patterns" value="Expressed in tongue muscle and 104 other cell types or tissues"/>
</dbReference>
<dbReference type="GO" id="GO:0005743">
    <property type="term" value="C:mitochondrial inner membrane"/>
    <property type="evidence" value="ECO:0000304"/>
    <property type="project" value="Reactome"/>
</dbReference>
<dbReference type="GO" id="GO:0005762">
    <property type="term" value="C:mitochondrial large ribosomal subunit"/>
    <property type="evidence" value="ECO:0000250"/>
    <property type="project" value="UniProtKB"/>
</dbReference>
<dbReference type="GO" id="GO:0003735">
    <property type="term" value="F:structural constituent of ribosome"/>
    <property type="evidence" value="ECO:0000318"/>
    <property type="project" value="GO_Central"/>
</dbReference>
<dbReference type="GO" id="GO:0032543">
    <property type="term" value="P:mitochondrial translation"/>
    <property type="evidence" value="ECO:0007669"/>
    <property type="project" value="InterPro"/>
</dbReference>
<dbReference type="FunFam" id="3.40.30.10:FF:000078">
    <property type="entry name" value="39S ribosomal protein L43, mitochondrial"/>
    <property type="match status" value="1"/>
</dbReference>
<dbReference type="Gene3D" id="3.40.30.10">
    <property type="entry name" value="Glutaredoxin"/>
    <property type="match status" value="1"/>
</dbReference>
<dbReference type="InterPro" id="IPR039927">
    <property type="entry name" value="Ribosomal_mL43"/>
</dbReference>
<dbReference type="InterPro" id="IPR007741">
    <property type="entry name" value="Ribosomal_mL43/mS25/NADH_DH"/>
</dbReference>
<dbReference type="InterPro" id="IPR036249">
    <property type="entry name" value="Thioredoxin-like_sf"/>
</dbReference>
<dbReference type="PANTHER" id="PTHR21396">
    <property type="entry name" value="39S RIBOSOMAL PROTEIN L43"/>
    <property type="match status" value="1"/>
</dbReference>
<dbReference type="PANTHER" id="PTHR21396:SF2">
    <property type="entry name" value="LARGE RIBOSOMAL SUBUNIT PROTEIN ML43"/>
    <property type="match status" value="1"/>
</dbReference>
<dbReference type="Pfam" id="PF05047">
    <property type="entry name" value="L51_S25_CI-B8"/>
    <property type="match status" value="1"/>
</dbReference>
<dbReference type="SMART" id="SM00916">
    <property type="entry name" value="L51_S25_CI-B8"/>
    <property type="match status" value="1"/>
</dbReference>
<dbReference type="SUPFAM" id="SSF52833">
    <property type="entry name" value="Thioredoxin-like"/>
    <property type="match status" value="1"/>
</dbReference>
<comment type="subunit">
    <text evidence="1">Component of the mitochondrial ribosome large subunit (39S) which comprises a 16S rRNA and about 50 distinct proteins.</text>
</comment>
<comment type="subcellular location">
    <subcellularLocation>
        <location evidence="1">Mitochondrion</location>
    </subcellularLocation>
</comment>
<comment type="similarity">
    <text evidence="4">Belongs to the mitochondrion-specific ribosomal protein mL43 family.</text>
</comment>
<comment type="sequence caution" evidence="4">
    <conflict type="miscellaneous discrepancy">
        <sequence resource="EMBL-CDS" id="AAA30756"/>
    </conflict>
    <text>Sequencing errors.</text>
</comment>
<gene>
    <name type="primary">MRPL43</name>
</gene>
<reference key="1">
    <citation type="journal article" date="1986" name="Neurosci. Res.">
        <title>Cloning and characterization of a cDNA specific for bovine retina.</title>
        <authorList>
            <person name="Nakagawa Y."/>
            <person name="Kuo C.H."/>
            <person name="Ishii K."/>
            <person name="Shiosaka S."/>
            <person name="Tohyama M."/>
            <person name="Miki N."/>
        </authorList>
    </citation>
    <scope>NUCLEOTIDE SEQUENCE [MRNA]</scope>
    <source>
        <tissue>Retina</tissue>
    </source>
</reference>
<reference key="2">
    <citation type="submission" date="2001-05" db="EMBL/GenBank/DDBJ databases">
        <title>Isolation of a novel gene expressed in retinal ganglion cell.</title>
        <authorList>
            <person name="Murakami A."/>
            <person name="Karasawa Y."/>
            <person name="Wada Y."/>
        </authorList>
    </citation>
    <scope>NUCLEOTIDE SEQUENCE [MRNA]</scope>
    <source>
        <tissue>Retina</tissue>
    </source>
</reference>
<reference key="3">
    <citation type="submission" date="2006-01" db="EMBL/GenBank/DDBJ databases">
        <authorList>
            <consortium name="NIH - Mammalian Gene Collection (MGC) project"/>
        </authorList>
    </citation>
    <scope>NUCLEOTIDE SEQUENCE [LARGE SCALE MRNA]</scope>
    <source>
        <strain>Hereford</strain>
        <tissue>Hypothalamus</tissue>
    </source>
</reference>
<proteinExistence type="evidence at transcript level"/>